<name>CYNS_TRIV2</name>
<feature type="chain" id="PRO_1000051463" description="Cyanate hydratase">
    <location>
        <begin position="1"/>
        <end position="146"/>
    </location>
</feature>
<feature type="active site" evidence="1">
    <location>
        <position position="87"/>
    </location>
</feature>
<feature type="active site" evidence="1">
    <location>
        <position position="90"/>
    </location>
</feature>
<feature type="active site" evidence="1">
    <location>
        <position position="113"/>
    </location>
</feature>
<reference key="1">
    <citation type="journal article" date="2014" name="Stand. Genomic Sci.">
        <title>Complete genome sequence of Anabaena variabilis ATCC 29413.</title>
        <authorList>
            <person name="Thiel T."/>
            <person name="Pratte B.S."/>
            <person name="Zhong J."/>
            <person name="Goodwin L."/>
            <person name="Copeland A."/>
            <person name="Lucas S."/>
            <person name="Han C."/>
            <person name="Pitluck S."/>
            <person name="Land M.L."/>
            <person name="Kyrpides N.C."/>
            <person name="Woyke T."/>
        </authorList>
    </citation>
    <scope>NUCLEOTIDE SEQUENCE [LARGE SCALE GENOMIC DNA]</scope>
    <source>
        <strain>ATCC 29413 / PCC 7937</strain>
    </source>
</reference>
<comment type="function">
    <text evidence="1">Catalyzes the reaction of cyanate with bicarbonate to produce ammonia and carbon dioxide.</text>
</comment>
<comment type="catalytic activity">
    <reaction evidence="1">
        <text>cyanate + hydrogencarbonate + 3 H(+) = NH4(+) + 2 CO2</text>
        <dbReference type="Rhea" id="RHEA:11120"/>
        <dbReference type="ChEBI" id="CHEBI:15378"/>
        <dbReference type="ChEBI" id="CHEBI:16526"/>
        <dbReference type="ChEBI" id="CHEBI:17544"/>
        <dbReference type="ChEBI" id="CHEBI:28938"/>
        <dbReference type="ChEBI" id="CHEBI:29195"/>
        <dbReference type="EC" id="4.2.1.104"/>
    </reaction>
</comment>
<comment type="similarity">
    <text evidence="1">Belongs to the cyanase family.</text>
</comment>
<protein>
    <recommendedName>
        <fullName evidence="1">Cyanate hydratase</fullName>
        <shortName evidence="1">Cyanase</shortName>
        <ecNumber evidence="1">4.2.1.104</ecNumber>
    </recommendedName>
    <alternativeName>
        <fullName evidence="1">Cyanate hydrolase</fullName>
    </alternativeName>
    <alternativeName>
        <fullName evidence="1">Cyanate lyase</fullName>
    </alternativeName>
</protein>
<proteinExistence type="inferred from homology"/>
<keyword id="KW-0456">Lyase</keyword>
<dbReference type="EC" id="4.2.1.104" evidence="1"/>
<dbReference type="EMBL" id="CP000117">
    <property type="protein sequence ID" value="ABA22625.1"/>
    <property type="molecule type" value="Genomic_DNA"/>
</dbReference>
<dbReference type="SMR" id="Q3M8R1"/>
<dbReference type="STRING" id="240292.Ava_3015"/>
<dbReference type="KEGG" id="ava:Ava_3015"/>
<dbReference type="eggNOG" id="COG1513">
    <property type="taxonomic scope" value="Bacteria"/>
</dbReference>
<dbReference type="HOGENOM" id="CLU_103452_1_0_3"/>
<dbReference type="Proteomes" id="UP000002533">
    <property type="component" value="Chromosome"/>
</dbReference>
<dbReference type="GO" id="GO:0008824">
    <property type="term" value="F:cyanate hydratase activity"/>
    <property type="evidence" value="ECO:0007669"/>
    <property type="project" value="UniProtKB-UniRule"/>
</dbReference>
<dbReference type="GO" id="GO:0003677">
    <property type="term" value="F:DNA binding"/>
    <property type="evidence" value="ECO:0007669"/>
    <property type="project" value="InterPro"/>
</dbReference>
<dbReference type="GO" id="GO:0009439">
    <property type="term" value="P:cyanate metabolic process"/>
    <property type="evidence" value="ECO:0007669"/>
    <property type="project" value="UniProtKB-UniRule"/>
</dbReference>
<dbReference type="CDD" id="cd00559">
    <property type="entry name" value="Cyanase_C"/>
    <property type="match status" value="1"/>
</dbReference>
<dbReference type="Gene3D" id="3.30.1160.10">
    <property type="entry name" value="Cyanate lyase, C-terminal domain"/>
    <property type="match status" value="1"/>
</dbReference>
<dbReference type="Gene3D" id="1.10.260.40">
    <property type="entry name" value="lambda repressor-like DNA-binding domains"/>
    <property type="match status" value="1"/>
</dbReference>
<dbReference type="HAMAP" id="MF_00535">
    <property type="entry name" value="Cyanate_hydrat"/>
    <property type="match status" value="1"/>
</dbReference>
<dbReference type="InterPro" id="IPR008076">
    <property type="entry name" value="Cyanase"/>
</dbReference>
<dbReference type="InterPro" id="IPR003712">
    <property type="entry name" value="Cyanate_lyase_C"/>
</dbReference>
<dbReference type="InterPro" id="IPR036581">
    <property type="entry name" value="Cyanate_lyase_C_sf"/>
</dbReference>
<dbReference type="InterPro" id="IPR010982">
    <property type="entry name" value="Lambda_DNA-bd_dom_sf"/>
</dbReference>
<dbReference type="NCBIfam" id="TIGR00673">
    <property type="entry name" value="cynS"/>
    <property type="match status" value="1"/>
</dbReference>
<dbReference type="NCBIfam" id="NF002773">
    <property type="entry name" value="PRK02866.1"/>
    <property type="match status" value="1"/>
</dbReference>
<dbReference type="PANTHER" id="PTHR34186">
    <property type="entry name" value="CYANATE HYDRATASE"/>
    <property type="match status" value="1"/>
</dbReference>
<dbReference type="PANTHER" id="PTHR34186:SF2">
    <property type="entry name" value="CYANATE HYDRATASE"/>
    <property type="match status" value="1"/>
</dbReference>
<dbReference type="Pfam" id="PF02560">
    <property type="entry name" value="Cyanate_lyase"/>
    <property type="match status" value="1"/>
</dbReference>
<dbReference type="PIRSF" id="PIRSF001263">
    <property type="entry name" value="Cyanate_hydratas"/>
    <property type="match status" value="1"/>
</dbReference>
<dbReference type="PRINTS" id="PR01693">
    <property type="entry name" value="CYANASE"/>
</dbReference>
<dbReference type="SMART" id="SM01116">
    <property type="entry name" value="Cyanate_lyase"/>
    <property type="match status" value="1"/>
</dbReference>
<dbReference type="SUPFAM" id="SSF55234">
    <property type="entry name" value="Cyanase C-terminal domain"/>
    <property type="match status" value="1"/>
</dbReference>
<dbReference type="SUPFAM" id="SSF47413">
    <property type="entry name" value="lambda repressor-like DNA-binding domains"/>
    <property type="match status" value="1"/>
</dbReference>
<sequence>MSIPEITQTLLQAKKDQGLSFADLEAILGRNEVWIAALFYRQASASEEEAKLLVEALGLDPSYIQHLTEYPIKGLGPIVPTDPLIYRFYEIMQVYGFPIKQVIQEKFGDGIMSAIDFTLDVEKEADPKGDRVKITMSGKFLPYKKW</sequence>
<gene>
    <name evidence="1" type="primary">cynS</name>
    <name type="ordered locus">Ava_3015</name>
</gene>
<evidence type="ECO:0000255" key="1">
    <source>
        <dbReference type="HAMAP-Rule" id="MF_00535"/>
    </source>
</evidence>
<accession>Q3M8R1</accession>
<organism>
    <name type="scientific">Trichormus variabilis (strain ATCC 29413 / PCC 7937)</name>
    <name type="common">Anabaena variabilis</name>
    <dbReference type="NCBI Taxonomy" id="240292"/>
    <lineage>
        <taxon>Bacteria</taxon>
        <taxon>Bacillati</taxon>
        <taxon>Cyanobacteriota</taxon>
        <taxon>Cyanophyceae</taxon>
        <taxon>Nostocales</taxon>
        <taxon>Nostocaceae</taxon>
        <taxon>Trichormus</taxon>
    </lineage>
</organism>